<keyword id="KW-0012">Acyltransferase</keyword>
<keyword id="KW-1185">Reference proteome</keyword>
<keyword id="KW-0677">Repeat</keyword>
<keyword id="KW-0808">Transferase</keyword>
<proteinExistence type="inferred from homology"/>
<gene>
    <name evidence="1" type="primary">mshD</name>
    <name type="ordered locus">ckrop_0397</name>
</gene>
<reference key="1">
    <citation type="journal article" date="2008" name="J. Biotechnol.">
        <title>Ultrafast pyrosequencing of Corynebacterium kroppenstedtii DSM44385 revealed insights into the physiology of a lipophilic corynebacterium that lacks mycolic acids.</title>
        <authorList>
            <person name="Tauch A."/>
            <person name="Schneider J."/>
            <person name="Szczepanowski R."/>
            <person name="Tilker A."/>
            <person name="Viehoever P."/>
            <person name="Gartemann K.-H."/>
            <person name="Arnold W."/>
            <person name="Blom J."/>
            <person name="Brinkrolf K."/>
            <person name="Brune I."/>
            <person name="Goetker S."/>
            <person name="Weisshaar B."/>
            <person name="Goesmann A."/>
            <person name="Droege M."/>
            <person name="Puehler A."/>
        </authorList>
    </citation>
    <scope>NUCLEOTIDE SEQUENCE [LARGE SCALE GENOMIC DNA]</scope>
    <source>
        <strain>DSM 44385 / JCM 11950 / CIP 105744 / CCUG 35717</strain>
    </source>
</reference>
<feature type="chain" id="PRO_0000400253" description="Mycothiol acetyltransferase">
    <location>
        <begin position="1"/>
        <end position="361"/>
    </location>
</feature>
<feature type="domain" description="N-acetyltransferase 1" evidence="1">
    <location>
        <begin position="25"/>
        <end position="173"/>
    </location>
</feature>
<feature type="domain" description="N-acetyltransferase 2" evidence="1">
    <location>
        <begin position="195"/>
        <end position="361"/>
    </location>
</feature>
<feature type="binding site" evidence="1">
    <location>
        <position position="59"/>
    </location>
    <ligand>
        <name>1D-myo-inositol 2-(L-cysteinylamino)-2-deoxy-alpha-D-glucopyranoside</name>
        <dbReference type="ChEBI" id="CHEBI:58887"/>
    </ligand>
</feature>
<feature type="binding site" evidence="1">
    <location>
        <begin position="98"/>
        <end position="100"/>
    </location>
    <ligand>
        <name>acetyl-CoA</name>
        <dbReference type="ChEBI" id="CHEBI:57288"/>
        <label>1</label>
    </ligand>
</feature>
<feature type="binding site" evidence="1">
    <location>
        <position position="229"/>
    </location>
    <ligand>
        <name>1D-myo-inositol 2-(L-cysteinylamino)-2-deoxy-alpha-D-glucopyranoside</name>
        <dbReference type="ChEBI" id="CHEBI:58887"/>
    </ligand>
</feature>
<feature type="binding site" evidence="1">
    <location>
        <position position="280"/>
    </location>
    <ligand>
        <name>1D-myo-inositol 2-(L-cysteinylamino)-2-deoxy-alpha-D-glucopyranoside</name>
        <dbReference type="ChEBI" id="CHEBI:58887"/>
    </ligand>
</feature>
<feature type="binding site" evidence="1">
    <location>
        <position position="295"/>
    </location>
    <ligand>
        <name>1D-myo-inositol 2-(L-cysteinylamino)-2-deoxy-alpha-D-glucopyranoside</name>
        <dbReference type="ChEBI" id="CHEBI:58887"/>
    </ligand>
</feature>
<feature type="binding site" evidence="1">
    <location>
        <begin position="299"/>
        <end position="301"/>
    </location>
    <ligand>
        <name>acetyl-CoA</name>
        <dbReference type="ChEBI" id="CHEBI:57288"/>
        <label>2</label>
    </ligand>
</feature>
<feature type="binding site" evidence="1">
    <location>
        <begin position="306"/>
        <end position="312"/>
    </location>
    <ligand>
        <name>acetyl-CoA</name>
        <dbReference type="ChEBI" id="CHEBI:57288"/>
        <label>2</label>
    </ligand>
</feature>
<feature type="binding site" evidence="1">
    <location>
        <position position="333"/>
    </location>
    <ligand>
        <name>1D-myo-inositol 2-(L-cysteinylamino)-2-deoxy-alpha-D-glucopyranoside</name>
        <dbReference type="ChEBI" id="CHEBI:58887"/>
    </ligand>
</feature>
<feature type="binding site" evidence="1">
    <location>
        <begin position="338"/>
        <end position="343"/>
    </location>
    <ligand>
        <name>acetyl-CoA</name>
        <dbReference type="ChEBI" id="CHEBI:57288"/>
        <label>2</label>
    </ligand>
</feature>
<evidence type="ECO:0000255" key="1">
    <source>
        <dbReference type="HAMAP-Rule" id="MF_01698"/>
    </source>
</evidence>
<organism>
    <name type="scientific">Corynebacterium kroppenstedtii (strain DSM 44385 / JCM 11950 / CIP 105744 / CCUG 35717)</name>
    <dbReference type="NCBI Taxonomy" id="645127"/>
    <lineage>
        <taxon>Bacteria</taxon>
        <taxon>Bacillati</taxon>
        <taxon>Actinomycetota</taxon>
        <taxon>Actinomycetes</taxon>
        <taxon>Mycobacteriales</taxon>
        <taxon>Corynebacteriaceae</taxon>
        <taxon>Corynebacterium</taxon>
    </lineage>
</organism>
<comment type="function">
    <text evidence="1">Catalyzes the transfer of acetyl from acetyl-CoA to desacetylmycothiol (Cys-GlcN-Ins) to form mycothiol.</text>
</comment>
<comment type="catalytic activity">
    <reaction evidence="1">
        <text>1D-myo-inositol 2-(L-cysteinylamino)-2-deoxy-alpha-D-glucopyranoside + acetyl-CoA = mycothiol + CoA + H(+)</text>
        <dbReference type="Rhea" id="RHEA:26172"/>
        <dbReference type="ChEBI" id="CHEBI:15378"/>
        <dbReference type="ChEBI" id="CHEBI:16768"/>
        <dbReference type="ChEBI" id="CHEBI:57287"/>
        <dbReference type="ChEBI" id="CHEBI:57288"/>
        <dbReference type="ChEBI" id="CHEBI:58887"/>
        <dbReference type="EC" id="2.3.1.189"/>
    </reaction>
</comment>
<comment type="subunit">
    <text evidence="1">Monomer.</text>
</comment>
<comment type="similarity">
    <text evidence="1">Belongs to the acetyltransferase family. MshD subfamily.</text>
</comment>
<sequence length="361" mass="39370">MADAPTFNAQPCDIITQLVLGPVSPRVRNARQASADRWMEIETILHESTRHDGVAPFSEQFLRGMEEPDLNHWHALVRVDGHVRGIAAVDPSGPAVELAVHPSYRRGGLATALQRAVRAHASSLGLGDERDIHTNGIGLTWWAHGDLPPARAAAEHIGATADRELLVMELPGSVVKDESDNNPVAQAAATLPDDVTVLSWTESARRWGKDAVDAAWLAVNNEAFDWHPEQGGWDQARLDQARRASWYDPDGVLLLWGSEGDQKDGDTDSLPPLLGFHWTKLAREGDDETGRKVGEVYVIGLARKAQGRGLGRASTAKGIQYLASNDAAYVELYVEADNAPAVHAYEALGFTVVERHTAWKF</sequence>
<accession>C4LH71</accession>
<name>MSHD_CORK4</name>
<dbReference type="EC" id="2.3.1.189" evidence="1"/>
<dbReference type="EMBL" id="CP001620">
    <property type="protein sequence ID" value="ACR17176.1"/>
    <property type="molecule type" value="Genomic_DNA"/>
</dbReference>
<dbReference type="RefSeq" id="WP_012731064.1">
    <property type="nucleotide sequence ID" value="NC_012704.1"/>
</dbReference>
<dbReference type="SMR" id="C4LH71"/>
<dbReference type="STRING" id="645127.ckrop_0397"/>
<dbReference type="KEGG" id="ckp:ckrop_0397"/>
<dbReference type="eggNOG" id="COG0456">
    <property type="taxonomic scope" value="Bacteria"/>
</dbReference>
<dbReference type="HOGENOM" id="CLU_068014_0_0_11"/>
<dbReference type="OrthoDB" id="3208058at2"/>
<dbReference type="Proteomes" id="UP000001473">
    <property type="component" value="Chromosome"/>
</dbReference>
<dbReference type="GO" id="GO:0035447">
    <property type="term" value="F:mycothiol synthase activity"/>
    <property type="evidence" value="ECO:0007669"/>
    <property type="project" value="UniProtKB-UniRule"/>
</dbReference>
<dbReference type="GO" id="GO:0008999">
    <property type="term" value="F:protein-N-terminal-alanine acetyltransferase activity"/>
    <property type="evidence" value="ECO:0007669"/>
    <property type="project" value="TreeGrafter"/>
</dbReference>
<dbReference type="GO" id="GO:0010125">
    <property type="term" value="P:mycothiol biosynthetic process"/>
    <property type="evidence" value="ECO:0007669"/>
    <property type="project" value="UniProtKB-UniRule"/>
</dbReference>
<dbReference type="CDD" id="cd04301">
    <property type="entry name" value="NAT_SF"/>
    <property type="match status" value="1"/>
</dbReference>
<dbReference type="Gene3D" id="3.40.630.30">
    <property type="match status" value="1"/>
</dbReference>
<dbReference type="HAMAP" id="MF_01698">
    <property type="entry name" value="MshD"/>
    <property type="match status" value="1"/>
</dbReference>
<dbReference type="InterPro" id="IPR016181">
    <property type="entry name" value="Acyl_CoA_acyltransferase"/>
</dbReference>
<dbReference type="InterPro" id="IPR000182">
    <property type="entry name" value="GNAT_dom"/>
</dbReference>
<dbReference type="InterPro" id="IPR050276">
    <property type="entry name" value="MshD_Acetyltransferase"/>
</dbReference>
<dbReference type="InterPro" id="IPR017813">
    <property type="entry name" value="Mycothiol_AcTrfase"/>
</dbReference>
<dbReference type="NCBIfam" id="TIGR03448">
    <property type="entry name" value="mycothiol_MshD"/>
    <property type="match status" value="1"/>
</dbReference>
<dbReference type="PANTHER" id="PTHR43617">
    <property type="entry name" value="L-AMINO ACID N-ACETYLTRANSFERASE"/>
    <property type="match status" value="1"/>
</dbReference>
<dbReference type="PANTHER" id="PTHR43617:SF31">
    <property type="entry name" value="MYCOTHIOL ACETYLTRANSFERASE"/>
    <property type="match status" value="1"/>
</dbReference>
<dbReference type="Pfam" id="PF00583">
    <property type="entry name" value="Acetyltransf_1"/>
    <property type="match status" value="2"/>
</dbReference>
<dbReference type="PIRSF" id="PIRSF021524">
    <property type="entry name" value="MSH_acetyltransferase"/>
    <property type="match status" value="1"/>
</dbReference>
<dbReference type="SUPFAM" id="SSF55729">
    <property type="entry name" value="Acyl-CoA N-acyltransferases (Nat)"/>
    <property type="match status" value="2"/>
</dbReference>
<dbReference type="PROSITE" id="PS51186">
    <property type="entry name" value="GNAT"/>
    <property type="match status" value="2"/>
</dbReference>
<protein>
    <recommendedName>
        <fullName evidence="1">Mycothiol acetyltransferase</fullName>
        <shortName evidence="1">MSH acetyltransferase</shortName>
        <ecNumber evidence="1">2.3.1.189</ecNumber>
    </recommendedName>
    <alternativeName>
        <fullName evidence="1">Mycothiol synthase</fullName>
    </alternativeName>
</protein>